<reference key="1">
    <citation type="journal article" date="2001" name="Science">
        <title>Mechanisms of evolution in Rickettsia conorii and R. prowazekii.</title>
        <authorList>
            <person name="Ogata H."/>
            <person name="Audic S."/>
            <person name="Renesto-Audiffren P."/>
            <person name="Fournier P.-E."/>
            <person name="Barbe V."/>
            <person name="Samson D."/>
            <person name="Roux V."/>
            <person name="Cossart P."/>
            <person name="Weissenbach J."/>
            <person name="Claverie J.-M."/>
            <person name="Raoult D."/>
        </authorList>
    </citation>
    <scope>NUCLEOTIDE SEQUENCE [LARGE SCALE GENOMIC DNA]</scope>
    <source>
        <strain>ATCC VR-613 / Malish 7</strain>
    </source>
</reference>
<comment type="function">
    <text evidence="1">Transfers the 4'-phosphopantetheine moiety from coenzyme A to a Ser of acyl-carrier-protein.</text>
</comment>
<comment type="catalytic activity">
    <reaction evidence="1">
        <text>apo-[ACP] + CoA = holo-[ACP] + adenosine 3',5'-bisphosphate + H(+)</text>
        <dbReference type="Rhea" id="RHEA:12068"/>
        <dbReference type="Rhea" id="RHEA-COMP:9685"/>
        <dbReference type="Rhea" id="RHEA-COMP:9690"/>
        <dbReference type="ChEBI" id="CHEBI:15378"/>
        <dbReference type="ChEBI" id="CHEBI:29999"/>
        <dbReference type="ChEBI" id="CHEBI:57287"/>
        <dbReference type="ChEBI" id="CHEBI:58343"/>
        <dbReference type="ChEBI" id="CHEBI:64479"/>
        <dbReference type="EC" id="2.7.8.7"/>
    </reaction>
</comment>
<comment type="cofactor">
    <cofactor evidence="1">
        <name>Mg(2+)</name>
        <dbReference type="ChEBI" id="CHEBI:18420"/>
    </cofactor>
</comment>
<comment type="subcellular location">
    <subcellularLocation>
        <location evidence="1">Cytoplasm</location>
    </subcellularLocation>
</comment>
<comment type="similarity">
    <text evidence="1">Belongs to the P-Pant transferase superfamily. AcpS family.</text>
</comment>
<name>ACPS_RICCN</name>
<proteinExistence type="inferred from homology"/>
<protein>
    <recommendedName>
        <fullName evidence="1">Holo-[acyl-carrier-protein] synthase</fullName>
        <shortName evidence="1">Holo-ACP synthase</shortName>
        <ecNumber evidence="1">2.7.8.7</ecNumber>
    </recommendedName>
    <alternativeName>
        <fullName evidence="1">4'-phosphopantetheinyl transferase AcpS</fullName>
    </alternativeName>
</protein>
<sequence>MLIGVGTDIVQIPRIEKILHLYPELFAKKILTSKELKQFALLGKINHAAFLAKRFAAKEAVSKAFGVGIGQGINFKDITILNNDLGKPIVEVSSNYTNTLSPFNIHLSLADDYPVCVAFAVIESSYNVILG</sequence>
<organism>
    <name type="scientific">Rickettsia conorii (strain ATCC VR-613 / Malish 7)</name>
    <dbReference type="NCBI Taxonomy" id="272944"/>
    <lineage>
        <taxon>Bacteria</taxon>
        <taxon>Pseudomonadati</taxon>
        <taxon>Pseudomonadota</taxon>
        <taxon>Alphaproteobacteria</taxon>
        <taxon>Rickettsiales</taxon>
        <taxon>Rickettsiaceae</taxon>
        <taxon>Rickettsieae</taxon>
        <taxon>Rickettsia</taxon>
        <taxon>spotted fever group</taxon>
    </lineage>
</organism>
<dbReference type="EC" id="2.7.8.7" evidence="1"/>
<dbReference type="EMBL" id="AE006914">
    <property type="protein sequence ID" value="AAL03419.1"/>
    <property type="molecule type" value="Genomic_DNA"/>
</dbReference>
<dbReference type="PIR" id="A97810">
    <property type="entry name" value="A97810"/>
</dbReference>
<dbReference type="RefSeq" id="WP_004998055.1">
    <property type="nucleotide sequence ID" value="NC_003103.1"/>
</dbReference>
<dbReference type="SMR" id="Q92H90"/>
<dbReference type="GeneID" id="95361390"/>
<dbReference type="KEGG" id="rco:RC0881"/>
<dbReference type="HOGENOM" id="CLU_089696_3_1_5"/>
<dbReference type="Proteomes" id="UP000000816">
    <property type="component" value="Chromosome"/>
</dbReference>
<dbReference type="GO" id="GO:0005737">
    <property type="term" value="C:cytoplasm"/>
    <property type="evidence" value="ECO:0007669"/>
    <property type="project" value="UniProtKB-SubCell"/>
</dbReference>
<dbReference type="GO" id="GO:0008897">
    <property type="term" value="F:holo-[acyl-carrier-protein] synthase activity"/>
    <property type="evidence" value="ECO:0007669"/>
    <property type="project" value="UniProtKB-UniRule"/>
</dbReference>
<dbReference type="GO" id="GO:0000287">
    <property type="term" value="F:magnesium ion binding"/>
    <property type="evidence" value="ECO:0007669"/>
    <property type="project" value="UniProtKB-UniRule"/>
</dbReference>
<dbReference type="GO" id="GO:0006633">
    <property type="term" value="P:fatty acid biosynthetic process"/>
    <property type="evidence" value="ECO:0007669"/>
    <property type="project" value="UniProtKB-UniRule"/>
</dbReference>
<dbReference type="Gene3D" id="3.90.470.20">
    <property type="entry name" value="4'-phosphopantetheinyl transferase domain"/>
    <property type="match status" value="1"/>
</dbReference>
<dbReference type="HAMAP" id="MF_00101">
    <property type="entry name" value="AcpS"/>
    <property type="match status" value="1"/>
</dbReference>
<dbReference type="InterPro" id="IPR008278">
    <property type="entry name" value="4-PPantetheinyl_Trfase_dom"/>
</dbReference>
<dbReference type="InterPro" id="IPR037143">
    <property type="entry name" value="4-PPantetheinyl_Trfase_dom_sf"/>
</dbReference>
<dbReference type="InterPro" id="IPR002582">
    <property type="entry name" value="ACPS"/>
</dbReference>
<dbReference type="InterPro" id="IPR004568">
    <property type="entry name" value="Ppantetheine-prot_Trfase_dom"/>
</dbReference>
<dbReference type="NCBIfam" id="TIGR00516">
    <property type="entry name" value="acpS"/>
    <property type="match status" value="1"/>
</dbReference>
<dbReference type="NCBIfam" id="TIGR00556">
    <property type="entry name" value="pantethn_trn"/>
    <property type="match status" value="1"/>
</dbReference>
<dbReference type="Pfam" id="PF01648">
    <property type="entry name" value="ACPS"/>
    <property type="match status" value="1"/>
</dbReference>
<dbReference type="SUPFAM" id="SSF56214">
    <property type="entry name" value="4'-phosphopantetheinyl transferase"/>
    <property type="match status" value="1"/>
</dbReference>
<accession>Q92H90</accession>
<evidence type="ECO:0000255" key="1">
    <source>
        <dbReference type="HAMAP-Rule" id="MF_00101"/>
    </source>
</evidence>
<keyword id="KW-0963">Cytoplasm</keyword>
<keyword id="KW-0275">Fatty acid biosynthesis</keyword>
<keyword id="KW-0276">Fatty acid metabolism</keyword>
<keyword id="KW-0444">Lipid biosynthesis</keyword>
<keyword id="KW-0443">Lipid metabolism</keyword>
<keyword id="KW-0460">Magnesium</keyword>
<keyword id="KW-0479">Metal-binding</keyword>
<keyword id="KW-0808">Transferase</keyword>
<gene>
    <name evidence="1" type="primary">acpS</name>
    <name type="ordered locus">RC0881</name>
</gene>
<feature type="chain" id="PRO_0000175692" description="Holo-[acyl-carrier-protein] synthase">
    <location>
        <begin position="1"/>
        <end position="131"/>
    </location>
</feature>
<feature type="binding site" evidence="1">
    <location>
        <position position="8"/>
    </location>
    <ligand>
        <name>Mg(2+)</name>
        <dbReference type="ChEBI" id="CHEBI:18420"/>
    </ligand>
</feature>
<feature type="binding site" evidence="1">
    <location>
        <position position="59"/>
    </location>
    <ligand>
        <name>Mg(2+)</name>
        <dbReference type="ChEBI" id="CHEBI:18420"/>
    </ligand>
</feature>